<accession>Q9JHE8</accession>
<evidence type="ECO:0000250" key="1">
    <source>
        <dbReference type="UniProtKB" id="Q9NZG7"/>
    </source>
</evidence>
<evidence type="ECO:0000305" key="2"/>
<gene>
    <name type="primary">Ninj2</name>
</gene>
<keyword id="KW-0130">Cell adhesion</keyword>
<keyword id="KW-1003">Cell membrane</keyword>
<keyword id="KW-0472">Membrane</keyword>
<keyword id="KW-1185">Reference proteome</keyword>
<keyword id="KW-0812">Transmembrane</keyword>
<keyword id="KW-1133">Transmembrane helix</keyword>
<dbReference type="EMBL" id="AB040815">
    <property type="protein sequence ID" value="BAA94291.1"/>
    <property type="molecule type" value="mRNA"/>
</dbReference>
<dbReference type="EMBL" id="AF250322">
    <property type="protein sequence ID" value="AAF65567.1"/>
    <property type="molecule type" value="mRNA"/>
</dbReference>
<dbReference type="RefSeq" id="NP_067606.1">
    <property type="nucleotide sequence ID" value="NM_021595.3"/>
</dbReference>
<dbReference type="RefSeq" id="XP_063142721.1">
    <property type="nucleotide sequence ID" value="XM_063286651.1"/>
</dbReference>
<dbReference type="SMR" id="Q9JHE8"/>
<dbReference type="FunCoup" id="Q9JHE8">
    <property type="interactions" value="193"/>
</dbReference>
<dbReference type="STRING" id="10116.ENSRNOP00000013721"/>
<dbReference type="PhosphoSitePlus" id="Q9JHE8"/>
<dbReference type="PaxDb" id="10116-ENSRNOP00000013721"/>
<dbReference type="Ensembl" id="ENSRNOT00000097409.1">
    <property type="protein sequence ID" value="ENSRNOP00000083990.1"/>
    <property type="gene ID" value="ENSRNOG00000010282.7"/>
</dbReference>
<dbReference type="GeneID" id="59115"/>
<dbReference type="KEGG" id="rno:59115"/>
<dbReference type="UCSC" id="RGD:620552">
    <property type="organism name" value="rat"/>
</dbReference>
<dbReference type="AGR" id="RGD:620552"/>
<dbReference type="CTD" id="4815"/>
<dbReference type="RGD" id="620552">
    <property type="gene designation" value="Ninj2"/>
</dbReference>
<dbReference type="eggNOG" id="ENOG502S2EJ">
    <property type="taxonomic scope" value="Eukaryota"/>
</dbReference>
<dbReference type="GeneTree" id="ENSGT00940000158219"/>
<dbReference type="HOGENOM" id="CLU_093971_1_0_1"/>
<dbReference type="InParanoid" id="Q9JHE8"/>
<dbReference type="OMA" id="PNFYGRR"/>
<dbReference type="OrthoDB" id="6114058at2759"/>
<dbReference type="PhylomeDB" id="Q9JHE8"/>
<dbReference type="TreeFam" id="TF323538"/>
<dbReference type="PRO" id="PR:Q9JHE8"/>
<dbReference type="Proteomes" id="UP000002494">
    <property type="component" value="Chromosome 4"/>
</dbReference>
<dbReference type="Bgee" id="ENSRNOG00000010282">
    <property type="expression patterns" value="Expressed in cerebellum and 12 other cell types or tissues"/>
</dbReference>
<dbReference type="GO" id="GO:0005886">
    <property type="term" value="C:plasma membrane"/>
    <property type="evidence" value="ECO:0000266"/>
    <property type="project" value="RGD"/>
</dbReference>
<dbReference type="GO" id="GO:0015485">
    <property type="term" value="F:cholesterol binding"/>
    <property type="evidence" value="ECO:0000250"/>
    <property type="project" value="UniProtKB"/>
</dbReference>
<dbReference type="GO" id="GO:0007155">
    <property type="term" value="P:cell adhesion"/>
    <property type="evidence" value="ECO:0000318"/>
    <property type="project" value="GO_Central"/>
</dbReference>
<dbReference type="GO" id="GO:0042246">
    <property type="term" value="P:tissue regeneration"/>
    <property type="evidence" value="ECO:0007669"/>
    <property type="project" value="InterPro"/>
</dbReference>
<dbReference type="InterPro" id="IPR007007">
    <property type="entry name" value="Ninjurin"/>
</dbReference>
<dbReference type="PANTHER" id="PTHR12316:SF24">
    <property type="entry name" value="NINJURIN-2"/>
    <property type="match status" value="1"/>
</dbReference>
<dbReference type="PANTHER" id="PTHR12316">
    <property type="entry name" value="NINJURIN-RELATED"/>
    <property type="match status" value="1"/>
</dbReference>
<dbReference type="Pfam" id="PF04923">
    <property type="entry name" value="Ninjurin"/>
    <property type="match status" value="1"/>
</dbReference>
<sequence length="144" mass="15996">MESDREIIHLQHRHSTPGGNQRHINLNHYATKKSVAESMLDVALFMSNAMRLKSVLEQGPFSQYYTTLLTLISASLLLQVVIGILLVVIARLNLNEVENQWRLNQLNNAATTLVFITVVINIFITAFGAHKTGSVAARTSSNPI</sequence>
<feature type="chain" id="PRO_0000159648" description="Ninjurin-2">
    <location>
        <begin position="1"/>
        <end position="144"/>
    </location>
</feature>
<feature type="topological domain" description="Extracellular" evidence="1">
    <location>
        <begin position="1"/>
        <end position="62"/>
    </location>
</feature>
<feature type="transmembrane region" description="Helical; Name=Helix alpha3" evidence="1">
    <location>
        <begin position="63"/>
        <end position="94"/>
    </location>
</feature>
<feature type="topological domain" description="Cytoplasmic" evidence="1">
    <location>
        <begin position="95"/>
        <end position="98"/>
    </location>
</feature>
<feature type="transmembrane region" description="Helical;Name=Helix alpha4" evidence="1">
    <location>
        <begin position="99"/>
        <end position="128"/>
    </location>
</feature>
<feature type="topological domain" description="Extracellular" evidence="1">
    <location>
        <begin position="129"/>
        <end position="144"/>
    </location>
</feature>
<feature type="region of interest" description="Helix alpha1" evidence="1">
    <location>
        <begin position="27"/>
        <end position="39"/>
    </location>
</feature>
<feature type="region of interest" description="Helix alpha2" evidence="1">
    <location>
        <begin position="40"/>
        <end position="59"/>
    </location>
</feature>
<feature type="binding site" evidence="1">
    <location>
        <position position="105"/>
    </location>
    <ligand>
        <name>cholesterol</name>
        <dbReference type="ChEBI" id="CHEBI:16113"/>
    </ligand>
</feature>
<organism>
    <name type="scientific">Rattus norvegicus</name>
    <name type="common">Rat</name>
    <dbReference type="NCBI Taxonomy" id="10116"/>
    <lineage>
        <taxon>Eukaryota</taxon>
        <taxon>Metazoa</taxon>
        <taxon>Chordata</taxon>
        <taxon>Craniata</taxon>
        <taxon>Vertebrata</taxon>
        <taxon>Euteleostomi</taxon>
        <taxon>Mammalia</taxon>
        <taxon>Eutheria</taxon>
        <taxon>Euarchontoglires</taxon>
        <taxon>Glires</taxon>
        <taxon>Rodentia</taxon>
        <taxon>Myomorpha</taxon>
        <taxon>Muroidea</taxon>
        <taxon>Muridae</taxon>
        <taxon>Murinae</taxon>
        <taxon>Rattus</taxon>
    </lineage>
</organism>
<proteinExistence type="evidence at transcript level"/>
<comment type="function">
    <text evidence="1">Its role in unclear. In contrast to NINJ1 paralog, does not mediate plasma membrane rupture (cytolysis) downstream of necroptotic and pyroptotic programmed cell death. While it is able to oligomerize and form filaments, filaments are curved toward the intracellular space, preventing circularization to mediate plasma membrane rupture. May act as a homophilic transmembrane adhesion molecule involved in nerve regeneration. Promotes axonal growth.</text>
</comment>
<comment type="subunit">
    <text evidence="1">Homooligomer; in response to stimuli, homooligomerizes into filaments. In contrast to NINJ1, the filament is curved toward the intracellular space, preventing its circularization on a relatively flat membrane to mediate plasma membrane rupture: curvature is caused by cholesterol-binding at the cytoplasmic leaflet.</text>
</comment>
<comment type="subcellular location">
    <subcellularLocation>
        <location evidence="1">Cell membrane</location>
        <topology evidence="1">Multi-pass membrane protein</topology>
    </subcellularLocation>
</comment>
<comment type="domain">
    <text evidence="1">Composed of 4 alpha helices: 2 hydrophobic transmembrane regions (alpha3 and alpha4) and 2 alpha helices (alpha1 and alpha2). Alpha1 and alpha2 feature one hydrophobic side and a hydrophilic side. In contrast to NINJ1, does not disrupt membrane integrity. NINJ2 filaments are curved toward the intracellular space due to cholesterol-binding, preventing circularization and ability to mediate plasma membrane rupture.</text>
</comment>
<comment type="similarity">
    <text evidence="2">Belongs to the ninjurin family.</text>
</comment>
<protein>
    <recommendedName>
        <fullName>Ninjurin-2</fullName>
    </recommendedName>
    <alternativeName>
        <fullName>Nerve injury-induced protein 2</fullName>
    </alternativeName>
</protein>
<name>NINJ2_RAT</name>
<reference key="1">
    <citation type="submission" date="2000-03" db="EMBL/GenBank/DDBJ databases">
        <authorList>
            <person name="Li W."/>
            <person name="Tian Q.B."/>
            <person name="Okano A."/>
            <person name="Suzuki T."/>
        </authorList>
    </citation>
    <scope>NUCLEOTIDE SEQUENCE [MRNA]</scope>
</reference>